<keyword id="KW-0051">Antiviral defense</keyword>
<keyword id="KW-0175">Coiled coil</keyword>
<keyword id="KW-1185">Reference proteome</keyword>
<dbReference type="EMBL" id="BX950851">
    <property type="protein sequence ID" value="CAG76579.1"/>
    <property type="molecule type" value="Genomic_DNA"/>
</dbReference>
<dbReference type="RefSeq" id="WP_011095181.1">
    <property type="nucleotide sequence ID" value="NC_004547.2"/>
</dbReference>
<dbReference type="SMR" id="Q6D0W8"/>
<dbReference type="STRING" id="218491.ECA3681"/>
<dbReference type="KEGG" id="eca:ECA3681"/>
<dbReference type="PATRIC" id="fig|218491.5.peg.3733"/>
<dbReference type="eggNOG" id="ENOG502Z8VU">
    <property type="taxonomic scope" value="Bacteria"/>
</dbReference>
<dbReference type="HOGENOM" id="CLU_038921_0_0_6"/>
<dbReference type="OrthoDB" id="9815616at2"/>
<dbReference type="Proteomes" id="UP000007966">
    <property type="component" value="Chromosome"/>
</dbReference>
<dbReference type="GO" id="GO:0051607">
    <property type="term" value="P:defense response to virus"/>
    <property type="evidence" value="ECO:0007669"/>
    <property type="project" value="UniProtKB-KW"/>
</dbReference>
<dbReference type="InterPro" id="IPR013397">
    <property type="entry name" value="CRISPR-assoc_prot_Csy1"/>
</dbReference>
<dbReference type="NCBIfam" id="TIGR02564">
    <property type="entry name" value="cas_Csy1"/>
    <property type="match status" value="1"/>
</dbReference>
<dbReference type="Pfam" id="PF09611">
    <property type="entry name" value="Cas_Csy1"/>
    <property type="match status" value="1"/>
</dbReference>
<organism>
    <name type="scientific">Pectobacterium atrosepticum (strain SCRI 1043 / ATCC BAA-672)</name>
    <name type="common">Erwinia carotovora subsp. atroseptica</name>
    <dbReference type="NCBI Taxonomy" id="218491"/>
    <lineage>
        <taxon>Bacteria</taxon>
        <taxon>Pseudomonadati</taxon>
        <taxon>Pseudomonadota</taxon>
        <taxon>Gammaproteobacteria</taxon>
        <taxon>Enterobacterales</taxon>
        <taxon>Pectobacteriaceae</taxon>
        <taxon>Pectobacterium</taxon>
    </lineage>
</organism>
<comment type="function">
    <text evidence="4">CRISPR (clustered regularly interspaced short palindromic repeat) is an adaptive immune system that provides protection against mobile genetic elements (viruses, transposable elements and conjugative plasmids). CRISPR clusters contain sequences complementary to antecedent mobile elements and target invading nucleic acids. CRISPR clusters are transcribed and processed into CRISPR RNA (crRNA).</text>
</comment>
<comment type="subunit">
    <text evidence="3">Interacts directly with Cys2; part of the probable Csy ribonucleoprotein complex with cys1, cys2, csy3, cas6f and crRNA.</text>
</comment>
<comment type="induction">
    <text evidence="2">Expressed in late exponential phase (other phases not tested); part of a large cas-CRISPR3 polycistronic operon.</text>
</comment>
<comment type="biotechnology">
    <text evidence="4">If the spacer DNA has a perfect match in the chromosome then toxicity results. Suppression of the toxic effects occurs via mutations in the CRISPR/Cas machinery, or via target deletion, which might contribute to genome plasticity. This CRISPR/Cas system can be used to remove genomic islands, and possibly other genomic regions.</text>
</comment>
<comment type="similarity">
    <text evidence="5">Belongs to the CRISPR-associated Csy1 family.</text>
</comment>
<evidence type="ECO:0000255" key="1"/>
<evidence type="ECO:0000269" key="2">
    <source>
    </source>
</evidence>
<evidence type="ECO:0000269" key="3">
    <source>
    </source>
</evidence>
<evidence type="ECO:0000269" key="4">
    <source>
    </source>
</evidence>
<evidence type="ECO:0000305" key="5"/>
<gene>
    <name type="primary">csy1</name>
    <name type="ordered locus">ECA3681</name>
</gene>
<reference key="1">
    <citation type="journal article" date="2004" name="Proc. Natl. Acad. Sci. U.S.A.">
        <title>Genome sequence of the enterobacterial phytopathogen Erwinia carotovora subsp. atroseptica and characterization of virulence factors.</title>
        <authorList>
            <person name="Bell K.S."/>
            <person name="Sebaihia M."/>
            <person name="Pritchard L."/>
            <person name="Holden M.T.G."/>
            <person name="Hyman L.J."/>
            <person name="Holeva M.C."/>
            <person name="Thomson N.R."/>
            <person name="Bentley S.D."/>
            <person name="Churcher L.J.C."/>
            <person name="Mungall K."/>
            <person name="Atkin R."/>
            <person name="Bason N."/>
            <person name="Brooks K."/>
            <person name="Chillingworth T."/>
            <person name="Clark K."/>
            <person name="Doggett J."/>
            <person name="Fraser A."/>
            <person name="Hance Z."/>
            <person name="Hauser H."/>
            <person name="Jagels K."/>
            <person name="Moule S."/>
            <person name="Norbertczak H."/>
            <person name="Ormond D."/>
            <person name="Price C."/>
            <person name="Quail M.A."/>
            <person name="Sanders M."/>
            <person name="Walker D."/>
            <person name="Whitehead S."/>
            <person name="Salmond G.P.C."/>
            <person name="Birch P.R.J."/>
            <person name="Parkhill J."/>
            <person name="Toth I.K."/>
        </authorList>
    </citation>
    <scope>NUCLEOTIDE SEQUENCE [LARGE SCALE GENOMIC DNA]</scope>
    <source>
        <strain>SCRI 1043 / ATCC BAA-672</strain>
    </source>
</reference>
<reference key="2">
    <citation type="journal article" date="2011" name="RNA Biol.">
        <title>Csy4 is responsible for CRISPR RNA processing in Pectobacterium atrosepticum.</title>
        <authorList>
            <person name="Przybilski R."/>
            <person name="Richter C."/>
            <person name="Gristwood T."/>
            <person name="Clulow J.S."/>
            <person name="Vercoe R.B."/>
            <person name="Fineran P.C."/>
        </authorList>
    </citation>
    <scope>INDUCTION</scope>
    <scope>OPERON STRUCTURE</scope>
    <source>
        <strain>SCRI 1043 / ATCC BAA-672</strain>
    </source>
</reference>
<reference key="3">
    <citation type="journal article" date="2012" name="PLoS ONE">
        <title>In vivo protein interactions and complex formation in the Pectobacterium atrosepticum subtype I-F CRISPR/Cas System.</title>
        <authorList>
            <person name="Richter C."/>
            <person name="Gristwood T."/>
            <person name="Clulow J.S."/>
            <person name="Fineran P.C."/>
        </authorList>
    </citation>
    <scope>IDENTIFICATION BY MASS SPECTROMETRY</scope>
    <scope>INTERACTION WITH CSY2</scope>
    <scope>SUBUNIT</scope>
    <source>
        <strain>SCRI 1043 / ATCC BAA-672</strain>
    </source>
</reference>
<reference key="4">
    <citation type="journal article" date="2013" name="PLoS Genet.">
        <title>Cytotoxic chromosomal targeting by CRISPR/Cas systems can reshape bacterial genomes and expel or remodel pathogenicity islands.</title>
        <authorList>
            <person name="Vercoe R.B."/>
            <person name="Chang J.T."/>
            <person name="Dy R.L."/>
            <person name="Taylor C."/>
            <person name="Gristwood T."/>
            <person name="Clulow J.S."/>
            <person name="Richter C."/>
            <person name="Przybilski R."/>
            <person name="Pitman A.R."/>
            <person name="Fineran P.C."/>
        </authorList>
    </citation>
    <scope>FUNCTION</scope>
    <scope>BIOTECHNOLOGY</scope>
    <source>
        <strain>SCRI 1043 / ATCC BAA-672</strain>
    </source>
</reference>
<sequence length="443" mass="50385">MRNGLPEFILSYINNRKQAKLDAFDKEAEKKRATLSGEALSVAELELAKARREIEQKHEVRNWLTDAASRAGQISLVTHALKFTHSDAKGSSVFNAETVEDATTLSTATLAQPAIDAVGNAAALDVAKLLQTEHDGDSLVAALQRGDNRALEALAENPEQLAQWLTGFQQVFTNRQPSSHKLAKQIYFPLANGEYHLLSPLYSSSLAHALHQRISAVRFGDEAKAIRQAQRTNQWHDQLSISYPNLAVQNMGGTKPQNISALNSSRSGRSYLLSSAPPQWNSIEKPPQQHESIFRPRGEVDYHTRATLAQMQRFLLSVKDVENNRDIRQQRLHYLDQLIDQLFFYVASVQNLPVGWSAESELKRAQQLWLDPYRAETDTVFRREREAGDWQQAVAYEFGRWLNRRLKHENLIFGEVERREWSTAALFKRRMREMESALKEELA</sequence>
<proteinExistence type="evidence at protein level"/>
<protein>
    <recommendedName>
        <fullName>CRISPR-associated protein Csy1</fullName>
    </recommendedName>
</protein>
<name>CSY1_PECAS</name>
<accession>Q6D0W8</accession>
<feature type="chain" id="PRO_0000430243" description="CRISPR-associated protein Csy1">
    <location>
        <begin position="1"/>
        <end position="443"/>
    </location>
</feature>
<feature type="coiled-coil region" evidence="1">
    <location>
        <begin position="15"/>
        <end position="64"/>
    </location>
</feature>